<reference key="1">
    <citation type="journal article" date="2004" name="Science">
        <title>The 1.2-megabase genome sequence of Mimivirus.</title>
        <authorList>
            <person name="Raoult D."/>
            <person name="Audic S."/>
            <person name="Robert C."/>
            <person name="Abergel C."/>
            <person name="Renesto P."/>
            <person name="Ogata H."/>
            <person name="La Scola B."/>
            <person name="Susan M."/>
            <person name="Claverie J.-M."/>
        </authorList>
    </citation>
    <scope>NUCLEOTIDE SEQUENCE [LARGE SCALE GENOMIC DNA]</scope>
    <source>
        <strain>Rowbotham-Bradford</strain>
    </source>
</reference>
<feature type="chain" id="PRO_0000309581" description="Uncharacterized exonuclease R569">
    <location>
        <begin position="1"/>
        <end position="321"/>
    </location>
</feature>
<feature type="domain" description="Exonuclease">
    <location>
        <begin position="130"/>
        <end position="314"/>
    </location>
</feature>
<keyword id="KW-0269">Exonuclease</keyword>
<keyword id="KW-0378">Hydrolase</keyword>
<keyword id="KW-0540">Nuclease</keyword>
<keyword id="KW-1185">Reference proteome</keyword>
<name>YR569_MIMIV</name>
<dbReference type="EC" id="3.1.-.-"/>
<dbReference type="EMBL" id="AY653733">
    <property type="protein sequence ID" value="AAV50832.1"/>
    <property type="molecule type" value="Genomic_DNA"/>
</dbReference>
<dbReference type="SMR" id="Q5UR48"/>
<dbReference type="Proteomes" id="UP000001134">
    <property type="component" value="Genome"/>
</dbReference>
<dbReference type="GO" id="GO:0008408">
    <property type="term" value="F:3'-5' exonuclease activity"/>
    <property type="evidence" value="ECO:0007669"/>
    <property type="project" value="TreeGrafter"/>
</dbReference>
<dbReference type="GO" id="GO:0003676">
    <property type="term" value="F:nucleic acid binding"/>
    <property type="evidence" value="ECO:0007669"/>
    <property type="project" value="InterPro"/>
</dbReference>
<dbReference type="CDD" id="cd06127">
    <property type="entry name" value="DEDDh"/>
    <property type="match status" value="1"/>
</dbReference>
<dbReference type="Gene3D" id="3.90.320.10">
    <property type="match status" value="1"/>
</dbReference>
<dbReference type="Gene3D" id="3.30.420.10">
    <property type="entry name" value="Ribonuclease H-like superfamily/Ribonuclease H"/>
    <property type="match status" value="1"/>
</dbReference>
<dbReference type="InterPro" id="IPR013520">
    <property type="entry name" value="Exonuclease_RNaseT/DNA_pol3"/>
</dbReference>
<dbReference type="InterPro" id="IPR011604">
    <property type="entry name" value="PDDEXK-like_dom_sf"/>
</dbReference>
<dbReference type="InterPro" id="IPR012337">
    <property type="entry name" value="RNaseH-like_sf"/>
</dbReference>
<dbReference type="InterPro" id="IPR036397">
    <property type="entry name" value="RNaseH_sf"/>
</dbReference>
<dbReference type="PANTHER" id="PTHR30231">
    <property type="entry name" value="DNA POLYMERASE III SUBUNIT EPSILON"/>
    <property type="match status" value="1"/>
</dbReference>
<dbReference type="PANTHER" id="PTHR30231:SF4">
    <property type="entry name" value="PROTEIN NEN2"/>
    <property type="match status" value="1"/>
</dbReference>
<dbReference type="Pfam" id="PF00929">
    <property type="entry name" value="RNase_T"/>
    <property type="match status" value="1"/>
</dbReference>
<dbReference type="SMART" id="SM00479">
    <property type="entry name" value="EXOIII"/>
    <property type="match status" value="1"/>
</dbReference>
<dbReference type="SUPFAM" id="SSF53098">
    <property type="entry name" value="Ribonuclease H-like"/>
    <property type="match status" value="1"/>
</dbReference>
<organismHost>
    <name type="scientific">Acanthamoeba polyphaga</name>
    <name type="common">Amoeba</name>
    <dbReference type="NCBI Taxonomy" id="5757"/>
</organismHost>
<proteinExistence type="predicted"/>
<protein>
    <recommendedName>
        <fullName>Uncharacterized exonuclease R569</fullName>
        <ecNumber>3.1.-.-</ecNumber>
    </recommendedName>
</protein>
<sequence length="321" mass="37292">MFKDINNYVKQNYVVKQIDNKIQVNYTKLLLMGEIDFIEKWPKDDTETIVEIKCVNSINIKYYMQLLLYNFCYYCTRPNSKYSLYRNSFKIINLLTGIEYIFSVSVTPGNMFTILNTLAKVGGLTFSGMNLVYDLETTGAIENQGPFEHKPVIQRSQIYFRNNKYYAIIYPEIIEIAIKDYETGLIIMNKLVKANSTLTLGIQNITGITPNMLVGQSTLDQIKVELEDKLKLFTACNMLAHNGNSFDNKIMLFYKLLNPQQVFFIDTLSVIPVHMESNSKLDKKNLSAIYYQLFKEKFQAHRAMNDVDALIKIMKYLKIEF</sequence>
<organism>
    <name type="scientific">Acanthamoeba polyphaga mimivirus</name>
    <name type="common">APMV</name>
    <dbReference type="NCBI Taxonomy" id="212035"/>
    <lineage>
        <taxon>Viruses</taxon>
        <taxon>Varidnaviria</taxon>
        <taxon>Bamfordvirae</taxon>
        <taxon>Nucleocytoviricota</taxon>
        <taxon>Megaviricetes</taxon>
        <taxon>Imitervirales</taxon>
        <taxon>Mimiviridae</taxon>
        <taxon>Megamimivirinae</taxon>
        <taxon>Mimivirus</taxon>
        <taxon>Mimivirus bradfordmassiliense</taxon>
    </lineage>
</organism>
<gene>
    <name type="ordered locus">MIMI_R569</name>
</gene>
<accession>Q5UR48</accession>